<name>INS_CHICK</name>
<dbReference type="EMBL" id="V00416">
    <property type="protein sequence ID" value="CAA23707.1"/>
    <property type="molecule type" value="Genomic_DNA"/>
</dbReference>
<dbReference type="EMBL" id="V00418">
    <property type="protein sequence ID" value="CAA23708.1"/>
    <property type="molecule type" value="Genomic_DNA"/>
</dbReference>
<dbReference type="EMBL" id="X58993">
    <property type="protein sequence ID" value="CAA41738.1"/>
    <property type="molecule type" value="mRNA"/>
</dbReference>
<dbReference type="EMBL" id="AY438372">
    <property type="protein sequence ID" value="AAR13049.1"/>
    <property type="molecule type" value="Genomic_DNA"/>
</dbReference>
<dbReference type="PIR" id="A90796">
    <property type="entry name" value="IPCH"/>
</dbReference>
<dbReference type="RefSeq" id="NP_990553.1">
    <property type="nucleotide sequence ID" value="NM_205222.3"/>
</dbReference>
<dbReference type="SMR" id="P67970"/>
<dbReference type="FunCoup" id="P67970">
    <property type="interactions" value="247"/>
</dbReference>
<dbReference type="STRING" id="9031.ENSGALP00000010567"/>
<dbReference type="PaxDb" id="9031-ENSGALP00000010567"/>
<dbReference type="Ensembl" id="ENSGALT00010059942.1">
    <property type="protein sequence ID" value="ENSGALP00010036702.1"/>
    <property type="gene ID" value="ENSGALG00010024574.1"/>
</dbReference>
<dbReference type="GeneID" id="396145"/>
<dbReference type="KEGG" id="gga:396145"/>
<dbReference type="CTD" id="3630"/>
<dbReference type="VEuPathDB" id="HostDB:geneid_396145"/>
<dbReference type="eggNOG" id="ENOG502S5P5">
    <property type="taxonomic scope" value="Eukaryota"/>
</dbReference>
<dbReference type="GeneTree" id="ENSGT00940000164327"/>
<dbReference type="HOGENOM" id="CLU_140421_1_0_1"/>
<dbReference type="InParanoid" id="P67970"/>
<dbReference type="OMA" id="LANQHLC"/>
<dbReference type="OrthoDB" id="10019596at2759"/>
<dbReference type="PhylomeDB" id="P67970"/>
<dbReference type="TreeFam" id="TF332820"/>
<dbReference type="Reactome" id="R-GGA-264876">
    <property type="pathway name" value="Insulin processing"/>
</dbReference>
<dbReference type="Reactome" id="R-GGA-422085">
    <property type="pathway name" value="Synthesis, secretion, and deacylation of Ghrelin"/>
</dbReference>
<dbReference type="Reactome" id="R-GGA-6807878">
    <property type="pathway name" value="COPI-mediated anterograde transport"/>
</dbReference>
<dbReference type="Reactome" id="R-GGA-74713">
    <property type="pathway name" value="IRS activation"/>
</dbReference>
<dbReference type="Reactome" id="R-GGA-74749">
    <property type="pathway name" value="Signal attenuation"/>
</dbReference>
<dbReference type="Reactome" id="R-GGA-74751">
    <property type="pathway name" value="Insulin receptor signalling cascade"/>
</dbReference>
<dbReference type="Reactome" id="R-GGA-74752">
    <property type="pathway name" value="Signaling by Insulin receptor"/>
</dbReference>
<dbReference type="Reactome" id="R-GGA-77387">
    <property type="pathway name" value="Insulin receptor recycling"/>
</dbReference>
<dbReference type="PRO" id="PR:P67970"/>
<dbReference type="Proteomes" id="UP000000539">
    <property type="component" value="Chromosome 5"/>
</dbReference>
<dbReference type="GO" id="GO:0005615">
    <property type="term" value="C:extracellular space"/>
    <property type="evidence" value="ECO:0000314"/>
    <property type="project" value="AgBase"/>
</dbReference>
<dbReference type="GO" id="GO:0005179">
    <property type="term" value="F:hormone activity"/>
    <property type="evidence" value="ECO:0007669"/>
    <property type="project" value="UniProtKB-KW"/>
</dbReference>
<dbReference type="GO" id="GO:0008283">
    <property type="term" value="P:cell population proliferation"/>
    <property type="evidence" value="ECO:0000314"/>
    <property type="project" value="AgBase"/>
</dbReference>
<dbReference type="GO" id="GO:0010467">
    <property type="term" value="P:gene expression"/>
    <property type="evidence" value="ECO:0000314"/>
    <property type="project" value="AgBase"/>
</dbReference>
<dbReference type="GO" id="GO:0006006">
    <property type="term" value="P:glucose metabolic process"/>
    <property type="evidence" value="ECO:0007669"/>
    <property type="project" value="UniProtKB-KW"/>
</dbReference>
<dbReference type="GO" id="GO:0043066">
    <property type="term" value="P:negative regulation of apoptotic process"/>
    <property type="evidence" value="ECO:0000314"/>
    <property type="project" value="AgBase"/>
</dbReference>
<dbReference type="GO" id="GO:0003407">
    <property type="term" value="P:neural retina development"/>
    <property type="evidence" value="ECO:0000304"/>
    <property type="project" value="AgBase"/>
</dbReference>
<dbReference type="GO" id="GO:0010628">
    <property type="term" value="P:positive regulation of gene expression"/>
    <property type="evidence" value="ECO:0000314"/>
    <property type="project" value="AgBase"/>
</dbReference>
<dbReference type="CDD" id="cd04367">
    <property type="entry name" value="IlGF_insulin_like"/>
    <property type="match status" value="1"/>
</dbReference>
<dbReference type="FunFam" id="1.10.100.10:FF:000003">
    <property type="entry name" value="Insulin"/>
    <property type="match status" value="1"/>
</dbReference>
<dbReference type="Gene3D" id="1.10.100.10">
    <property type="entry name" value="Insulin-like"/>
    <property type="match status" value="1"/>
</dbReference>
<dbReference type="InterPro" id="IPR004825">
    <property type="entry name" value="Insulin"/>
</dbReference>
<dbReference type="InterPro" id="IPR016179">
    <property type="entry name" value="Insulin-like"/>
</dbReference>
<dbReference type="InterPro" id="IPR036438">
    <property type="entry name" value="Insulin-like_sf"/>
</dbReference>
<dbReference type="InterPro" id="IPR022353">
    <property type="entry name" value="Insulin_CS"/>
</dbReference>
<dbReference type="InterPro" id="IPR022352">
    <property type="entry name" value="Insulin_family"/>
</dbReference>
<dbReference type="PANTHER" id="PTHR11454:SF9">
    <property type="entry name" value="INSULIN"/>
    <property type="match status" value="1"/>
</dbReference>
<dbReference type="PANTHER" id="PTHR11454">
    <property type="entry name" value="INSULIN/INSULIN GROWTH FACTOR"/>
    <property type="match status" value="1"/>
</dbReference>
<dbReference type="Pfam" id="PF00049">
    <property type="entry name" value="Insulin"/>
    <property type="match status" value="1"/>
</dbReference>
<dbReference type="PRINTS" id="PR00277">
    <property type="entry name" value="INSULIN"/>
</dbReference>
<dbReference type="PRINTS" id="PR00276">
    <property type="entry name" value="INSULINFAMLY"/>
</dbReference>
<dbReference type="SMART" id="SM00078">
    <property type="entry name" value="IlGF"/>
    <property type="match status" value="1"/>
</dbReference>
<dbReference type="SUPFAM" id="SSF56994">
    <property type="entry name" value="Insulin-like"/>
    <property type="match status" value="1"/>
</dbReference>
<dbReference type="PROSITE" id="PS00262">
    <property type="entry name" value="INSULIN"/>
    <property type="match status" value="1"/>
</dbReference>
<gene>
    <name type="primary">INS</name>
</gene>
<keyword id="KW-0119">Carbohydrate metabolism</keyword>
<keyword id="KW-0165">Cleavage on pair of basic residues</keyword>
<keyword id="KW-0903">Direct protein sequencing</keyword>
<keyword id="KW-1015">Disulfide bond</keyword>
<keyword id="KW-0313">Glucose metabolism</keyword>
<keyword id="KW-0372">Hormone</keyword>
<keyword id="KW-1185">Reference proteome</keyword>
<keyword id="KW-0964">Secreted</keyword>
<keyword id="KW-0732">Signal</keyword>
<proteinExistence type="evidence at protein level"/>
<feature type="signal peptide" evidence="1">
    <location>
        <begin position="1"/>
        <end position="24"/>
    </location>
</feature>
<feature type="peptide" id="PRO_0000015790" description="Insulin B chain">
    <location>
        <begin position="25"/>
        <end position="54"/>
    </location>
</feature>
<feature type="propeptide" id="PRO_0000015791" description="C peptide">
    <location>
        <begin position="57"/>
        <end position="84"/>
    </location>
</feature>
<feature type="peptide" id="PRO_0000015792" description="Insulin A chain">
    <location>
        <begin position="87"/>
        <end position="107"/>
    </location>
</feature>
<feature type="disulfide bond" description="Interchain (between B and A chains)">
    <location>
        <begin position="31"/>
        <end position="93"/>
    </location>
</feature>
<feature type="disulfide bond" description="Interchain (between B and A chains)">
    <location>
        <begin position="43"/>
        <end position="106"/>
    </location>
</feature>
<feature type="disulfide bond">
    <location>
        <begin position="92"/>
        <end position="97"/>
    </location>
</feature>
<protein>
    <recommendedName>
        <fullName>Insulin</fullName>
    </recommendedName>
    <component>
        <recommendedName>
            <fullName>Insulin B chain</fullName>
        </recommendedName>
    </component>
    <component>
        <recommendedName>
            <fullName>Insulin A chain</fullName>
        </recommendedName>
    </component>
</protein>
<organism>
    <name type="scientific">Gallus gallus</name>
    <name type="common">Chicken</name>
    <dbReference type="NCBI Taxonomy" id="9031"/>
    <lineage>
        <taxon>Eukaryota</taxon>
        <taxon>Metazoa</taxon>
        <taxon>Chordata</taxon>
        <taxon>Craniata</taxon>
        <taxon>Vertebrata</taxon>
        <taxon>Euteleostomi</taxon>
        <taxon>Archelosauria</taxon>
        <taxon>Archosauria</taxon>
        <taxon>Dinosauria</taxon>
        <taxon>Saurischia</taxon>
        <taxon>Theropoda</taxon>
        <taxon>Coelurosauria</taxon>
        <taxon>Aves</taxon>
        <taxon>Neognathae</taxon>
        <taxon>Galloanserae</taxon>
        <taxon>Galliformes</taxon>
        <taxon>Phasianidae</taxon>
        <taxon>Phasianinae</taxon>
        <taxon>Gallus</taxon>
    </lineage>
</organism>
<comment type="function">
    <text>Insulin decreases blood glucose concentration. It increases cell permeability to monosaccharides, amino acids and fatty acids. It accelerates glycolysis, the pentose phosphate cycle, and glycogen synthesis in liver.</text>
</comment>
<comment type="subunit">
    <text>Heterodimer of a B chain and an A chain linked by two disulfide bonds.</text>
</comment>
<comment type="subcellular location">
    <subcellularLocation>
        <location>Secreted</location>
    </subcellularLocation>
</comment>
<comment type="similarity">
    <text evidence="2">Belongs to the insulin family.</text>
</comment>
<reference key="1">
    <citation type="journal article" date="1980" name="Cell">
        <title>The evolution of genes: the chicken preproinsulin gene.</title>
        <authorList>
            <person name="Perler F."/>
            <person name="Efstratiadis A."/>
            <person name="Lomedico P."/>
            <person name="Gilbert W."/>
            <person name="Kolodner R."/>
            <person name="Dodgson J.B."/>
        </authorList>
    </citation>
    <scope>NUCLEOTIDE SEQUENCE [GENOMIC DNA]</scope>
</reference>
<reference key="2">
    <citation type="journal article" date="1991" name="Anim. Sci. Technol.">
        <title>Isolation of a cDNA encoding chicken insulin precursor.</title>
        <authorList>
            <person name="Hasegawa S."/>
            <person name="Honda K."/>
            <person name="Nata K."/>
            <person name="Yonekura H."/>
            <person name="Okamoto H."/>
            <person name="Hikami Y."/>
        </authorList>
    </citation>
    <scope>NUCLEOTIDE SEQUENCE [MRNA]</scope>
    <source>
        <tissue>Pancreas</tissue>
    </source>
</reference>
<reference key="3">
    <citation type="submission" date="2003-10" db="EMBL/GenBank/DDBJ databases">
        <title>Complete coding region of chicken preproinsulin gene.</title>
        <authorList>
            <person name="Nie Q."/>
            <person name="Fang M."/>
            <person name="Sun B."/>
            <person name="Lei M."/>
            <person name="Zhang X."/>
        </authorList>
    </citation>
    <scope>NUCLEOTIDE SEQUENCE [GENOMIC DNA]</scope>
</reference>
<reference key="4">
    <citation type="journal article" date="1966" name="Am. J. Med.">
        <title>Species variation in the amino acid sequence of insulin.</title>
        <authorList>
            <person name="Smith L.F."/>
        </authorList>
    </citation>
    <scope>PROTEIN SEQUENCE OF 25-54 AND 87-107</scope>
</reference>
<sequence length="107" mass="11981">MALWIRSLPLLALLVFSGPGTSYAAANQHLCGSHLVEALYLVCGERGFFYSPKARRDVEQPLVSSPLRGEAGVLPFQQEEYEKVKRGIVEQCCHNTCSLYQLENYCN</sequence>
<evidence type="ECO:0000269" key="1">
    <source>
    </source>
</evidence>
<evidence type="ECO:0000305" key="2"/>
<accession>P67970</accession>
<accession>P01332</accession>
<accession>Q53YX4</accession>